<protein>
    <recommendedName>
        <fullName>Protein G1-like1</fullName>
    </recommendedName>
</protein>
<name>G1L1_ORYSI</name>
<evidence type="ECO:0000250" key="1"/>
<evidence type="ECO:0000255" key="2"/>
<evidence type="ECO:0000255" key="3">
    <source>
        <dbReference type="PROSITE-ProRule" id="PRU01033"/>
    </source>
</evidence>
<evidence type="ECO:0000256" key="4">
    <source>
        <dbReference type="SAM" id="MobiDB-lite"/>
    </source>
</evidence>
<evidence type="ECO:0000305" key="5"/>
<proteinExistence type="inferred from homology"/>
<keyword id="KW-0175">Coiled coil</keyword>
<keyword id="KW-0217">Developmental protein</keyword>
<keyword id="KW-0238">DNA-binding</keyword>
<keyword id="KW-0539">Nucleus</keyword>
<keyword id="KW-1185">Reference proteome</keyword>
<keyword id="KW-0804">Transcription</keyword>
<keyword id="KW-0805">Transcription regulation</keyword>
<organism>
    <name type="scientific">Oryza sativa subsp. indica</name>
    <name type="common">Rice</name>
    <dbReference type="NCBI Taxonomy" id="39946"/>
    <lineage>
        <taxon>Eukaryota</taxon>
        <taxon>Viridiplantae</taxon>
        <taxon>Streptophyta</taxon>
        <taxon>Embryophyta</taxon>
        <taxon>Tracheophyta</taxon>
        <taxon>Spermatophyta</taxon>
        <taxon>Magnoliopsida</taxon>
        <taxon>Liliopsida</taxon>
        <taxon>Poales</taxon>
        <taxon>Poaceae</taxon>
        <taxon>BOP clade</taxon>
        <taxon>Oryzoideae</taxon>
        <taxon>Oryzeae</taxon>
        <taxon>Oryzinae</taxon>
        <taxon>Oryza</taxon>
        <taxon>Oryza sativa</taxon>
    </lineage>
</organism>
<sequence>MDMIGMASPAESPGGGGTARPSRYESQKRRDWQTFGQYLRNHRPPLELSRCSGAHVLEFLRYLDQFGKTKVHAHGCPFFGHPSPPAPCPCPLRQAWGSLDALVGRLRAAFEEHGGRPESNPFGARAVRLYLRDIRDTQSKARGIAYEKKRRKRAAASHTKQKQQQQQLVEQAAAAAEAHAAGCMMPLSVFN</sequence>
<accession>B8AIK3</accession>
<reference key="1">
    <citation type="journal article" date="2005" name="PLoS Biol.">
        <title>The genomes of Oryza sativa: a history of duplications.</title>
        <authorList>
            <person name="Yu J."/>
            <person name="Wang J."/>
            <person name="Lin W."/>
            <person name="Li S."/>
            <person name="Li H."/>
            <person name="Zhou J."/>
            <person name="Ni P."/>
            <person name="Dong W."/>
            <person name="Hu S."/>
            <person name="Zeng C."/>
            <person name="Zhang J."/>
            <person name="Zhang Y."/>
            <person name="Li R."/>
            <person name="Xu Z."/>
            <person name="Li S."/>
            <person name="Li X."/>
            <person name="Zheng H."/>
            <person name="Cong L."/>
            <person name="Lin L."/>
            <person name="Yin J."/>
            <person name="Geng J."/>
            <person name="Li G."/>
            <person name="Shi J."/>
            <person name="Liu J."/>
            <person name="Lv H."/>
            <person name="Li J."/>
            <person name="Wang J."/>
            <person name="Deng Y."/>
            <person name="Ran L."/>
            <person name="Shi X."/>
            <person name="Wang X."/>
            <person name="Wu Q."/>
            <person name="Li C."/>
            <person name="Ren X."/>
            <person name="Wang J."/>
            <person name="Wang X."/>
            <person name="Li D."/>
            <person name="Liu D."/>
            <person name="Zhang X."/>
            <person name="Ji Z."/>
            <person name="Zhao W."/>
            <person name="Sun Y."/>
            <person name="Zhang Z."/>
            <person name="Bao J."/>
            <person name="Han Y."/>
            <person name="Dong L."/>
            <person name="Ji J."/>
            <person name="Chen P."/>
            <person name="Wu S."/>
            <person name="Liu J."/>
            <person name="Xiao Y."/>
            <person name="Bu D."/>
            <person name="Tan J."/>
            <person name="Yang L."/>
            <person name="Ye C."/>
            <person name="Zhang J."/>
            <person name="Xu J."/>
            <person name="Zhou Y."/>
            <person name="Yu Y."/>
            <person name="Zhang B."/>
            <person name="Zhuang S."/>
            <person name="Wei H."/>
            <person name="Liu B."/>
            <person name="Lei M."/>
            <person name="Yu H."/>
            <person name="Li Y."/>
            <person name="Xu H."/>
            <person name="Wei S."/>
            <person name="He X."/>
            <person name="Fang L."/>
            <person name="Zhang Z."/>
            <person name="Zhang Y."/>
            <person name="Huang X."/>
            <person name="Su Z."/>
            <person name="Tong W."/>
            <person name="Li J."/>
            <person name="Tong Z."/>
            <person name="Li S."/>
            <person name="Ye J."/>
            <person name="Wang L."/>
            <person name="Fang L."/>
            <person name="Lei T."/>
            <person name="Chen C.-S."/>
            <person name="Chen H.-C."/>
            <person name="Xu Z."/>
            <person name="Li H."/>
            <person name="Huang H."/>
            <person name="Zhang F."/>
            <person name="Xu H."/>
            <person name="Li N."/>
            <person name="Zhao C."/>
            <person name="Li S."/>
            <person name="Dong L."/>
            <person name="Huang Y."/>
            <person name="Li L."/>
            <person name="Xi Y."/>
            <person name="Qi Q."/>
            <person name="Li W."/>
            <person name="Zhang B."/>
            <person name="Hu W."/>
            <person name="Zhang Y."/>
            <person name="Tian X."/>
            <person name="Jiao Y."/>
            <person name="Liang X."/>
            <person name="Jin J."/>
            <person name="Gao L."/>
            <person name="Zheng W."/>
            <person name="Hao B."/>
            <person name="Liu S.-M."/>
            <person name="Wang W."/>
            <person name="Yuan L."/>
            <person name="Cao M."/>
            <person name="McDermott J."/>
            <person name="Samudrala R."/>
            <person name="Wang J."/>
            <person name="Wong G.K.-S."/>
            <person name="Yang H."/>
        </authorList>
    </citation>
    <scope>NUCLEOTIDE SEQUENCE [LARGE SCALE GENOMIC DNA]</scope>
    <source>
        <strain>cv. 93-11</strain>
    </source>
</reference>
<dbReference type="EMBL" id="CM000127">
    <property type="protein sequence ID" value="EEC72560.1"/>
    <property type="molecule type" value="Genomic_DNA"/>
</dbReference>
<dbReference type="SMR" id="B8AIK3"/>
<dbReference type="STRING" id="39946.B8AIK3"/>
<dbReference type="EnsemblPlants" id="BGIOSGA007612-TA">
    <property type="protein sequence ID" value="BGIOSGA007612-PA"/>
    <property type="gene ID" value="BGIOSGA007612"/>
</dbReference>
<dbReference type="Gramene" id="BGIOSGA007612-TA">
    <property type="protein sequence ID" value="BGIOSGA007612-PA"/>
    <property type="gene ID" value="BGIOSGA007612"/>
</dbReference>
<dbReference type="HOGENOM" id="CLU_071168_1_0_1"/>
<dbReference type="OMA" id="HHLFMPH"/>
<dbReference type="Proteomes" id="UP000007015">
    <property type="component" value="Chromosome 2"/>
</dbReference>
<dbReference type="GO" id="GO:0005634">
    <property type="term" value="C:nucleus"/>
    <property type="evidence" value="ECO:0000250"/>
    <property type="project" value="UniProtKB"/>
</dbReference>
<dbReference type="GO" id="GO:0003677">
    <property type="term" value="F:DNA binding"/>
    <property type="evidence" value="ECO:0007669"/>
    <property type="project" value="UniProtKB-KW"/>
</dbReference>
<dbReference type="GO" id="GO:0009299">
    <property type="term" value="P:mRNA transcription"/>
    <property type="evidence" value="ECO:0000250"/>
    <property type="project" value="UniProtKB"/>
</dbReference>
<dbReference type="GO" id="GO:0090698">
    <property type="term" value="P:post-embryonic plant morphogenesis"/>
    <property type="evidence" value="ECO:0000250"/>
    <property type="project" value="UniProtKB"/>
</dbReference>
<dbReference type="GO" id="GO:0009416">
    <property type="term" value="P:response to light stimulus"/>
    <property type="evidence" value="ECO:0007669"/>
    <property type="project" value="TreeGrafter"/>
</dbReference>
<dbReference type="InterPro" id="IPR040222">
    <property type="entry name" value="ALOG"/>
</dbReference>
<dbReference type="InterPro" id="IPR006936">
    <property type="entry name" value="ALOG_dom"/>
</dbReference>
<dbReference type="PANTHER" id="PTHR31165:SF122">
    <property type="entry name" value="PROTEIN G1-LIKE1"/>
    <property type="match status" value="1"/>
</dbReference>
<dbReference type="PANTHER" id="PTHR31165">
    <property type="entry name" value="PROTEIN G1-LIKE2"/>
    <property type="match status" value="1"/>
</dbReference>
<dbReference type="Pfam" id="PF04852">
    <property type="entry name" value="ALOG_dom"/>
    <property type="match status" value="1"/>
</dbReference>
<dbReference type="PROSITE" id="PS51697">
    <property type="entry name" value="ALOG"/>
    <property type="match status" value="1"/>
</dbReference>
<feature type="chain" id="PRO_0000425300" description="Protein G1-like1">
    <location>
        <begin position="1"/>
        <end position="191"/>
    </location>
</feature>
<feature type="domain" description="ALOG" evidence="3">
    <location>
        <begin position="23"/>
        <end position="150"/>
    </location>
</feature>
<feature type="region of interest" description="Disordered" evidence="4">
    <location>
        <begin position="1"/>
        <end position="29"/>
    </location>
</feature>
<feature type="coiled-coil region" evidence="2">
    <location>
        <begin position="152"/>
        <end position="179"/>
    </location>
</feature>
<feature type="short sequence motif" description="Nuclear localization signal" evidence="1">
    <location>
        <begin position="148"/>
        <end position="152"/>
    </location>
</feature>
<comment type="function">
    <text evidence="1">Probable transcription regulator that acts as a developmental regulator by promoting cell growth in response to light.</text>
</comment>
<comment type="subcellular location">
    <subcellularLocation>
        <location evidence="1">Nucleus</location>
    </subcellularLocation>
</comment>
<comment type="similarity">
    <text evidence="5">Belongs to the plant homeotic and developmental regulators ALOG protein family.</text>
</comment>
<gene>
    <name type="ORF">OsI_05993</name>
</gene>